<organism>
    <name type="scientific">Escherichia coli (strain SMS-3-5 / SECEC)</name>
    <dbReference type="NCBI Taxonomy" id="439855"/>
    <lineage>
        <taxon>Bacteria</taxon>
        <taxon>Pseudomonadati</taxon>
        <taxon>Pseudomonadota</taxon>
        <taxon>Gammaproteobacteria</taxon>
        <taxon>Enterobacterales</taxon>
        <taxon>Enterobacteriaceae</taxon>
        <taxon>Escherichia</taxon>
    </lineage>
</organism>
<comment type="subcellular location">
    <subcellularLocation>
        <location evidence="1">Cell membrane</location>
        <topology evidence="1">Multi-pass membrane protein</topology>
    </subcellularLocation>
</comment>
<comment type="similarity">
    <text evidence="1">Belongs to the UPF0756 family.</text>
</comment>
<name>YEAL_ECOSM</name>
<dbReference type="EMBL" id="CP000970">
    <property type="protein sequence ID" value="ACB18470.1"/>
    <property type="molecule type" value="Genomic_DNA"/>
</dbReference>
<dbReference type="RefSeq" id="WP_000460707.1">
    <property type="nucleotide sequence ID" value="NC_010498.1"/>
</dbReference>
<dbReference type="KEGG" id="ecm:EcSMS35_1401"/>
<dbReference type="HOGENOM" id="CLU_125889_0_0_6"/>
<dbReference type="Proteomes" id="UP000007011">
    <property type="component" value="Chromosome"/>
</dbReference>
<dbReference type="GO" id="GO:0005886">
    <property type="term" value="C:plasma membrane"/>
    <property type="evidence" value="ECO:0007669"/>
    <property type="project" value="UniProtKB-SubCell"/>
</dbReference>
<dbReference type="HAMAP" id="MF_01874">
    <property type="entry name" value="UPF0756"/>
    <property type="match status" value="1"/>
</dbReference>
<dbReference type="InterPro" id="IPR007382">
    <property type="entry name" value="UPF0756_TM"/>
</dbReference>
<dbReference type="PANTHER" id="PTHR38452">
    <property type="entry name" value="UPF0756 MEMBRANE PROTEIN YEAL"/>
    <property type="match status" value="1"/>
</dbReference>
<dbReference type="PANTHER" id="PTHR38452:SF1">
    <property type="entry name" value="UPF0756 MEMBRANE PROTEIN YEAL"/>
    <property type="match status" value="1"/>
</dbReference>
<dbReference type="Pfam" id="PF04284">
    <property type="entry name" value="DUF441"/>
    <property type="match status" value="1"/>
</dbReference>
<sequence length="148" mass="15256">MFDVTLLILLGLAALGFISHNTTVAVSILVLIIVRVTPLSTFFPWIEKQGLSIGIIILTIGVMAPIASGTLPPSTLIHSFLNWKSLVAIAVGVIVSWLGGRGVTLMGSQPQLVAGLLVGTVLGVALFRGVPVGPLIAAGLVSLIVGKQ</sequence>
<protein>
    <recommendedName>
        <fullName evidence="1">UPF0756 membrane protein YeaL</fullName>
    </recommendedName>
</protein>
<reference key="1">
    <citation type="journal article" date="2008" name="J. Bacteriol.">
        <title>Insights into the environmental resistance gene pool from the genome sequence of the multidrug-resistant environmental isolate Escherichia coli SMS-3-5.</title>
        <authorList>
            <person name="Fricke W.F."/>
            <person name="Wright M.S."/>
            <person name="Lindell A.H."/>
            <person name="Harkins D.M."/>
            <person name="Baker-Austin C."/>
            <person name="Ravel J."/>
            <person name="Stepanauskas R."/>
        </authorList>
    </citation>
    <scope>NUCLEOTIDE SEQUENCE [LARGE SCALE GENOMIC DNA]</scope>
    <source>
        <strain>SMS-3-5 / SECEC</strain>
    </source>
</reference>
<proteinExistence type="inferred from homology"/>
<accession>B1LD87</accession>
<evidence type="ECO:0000255" key="1">
    <source>
        <dbReference type="HAMAP-Rule" id="MF_01874"/>
    </source>
</evidence>
<gene>
    <name evidence="1" type="primary">yeaL</name>
    <name type="ordered locus">EcSMS35_1401</name>
</gene>
<feature type="chain" id="PRO_0000388860" description="UPF0756 membrane protein YeaL">
    <location>
        <begin position="1"/>
        <end position="148"/>
    </location>
</feature>
<feature type="transmembrane region" description="Helical" evidence="1">
    <location>
        <begin position="14"/>
        <end position="34"/>
    </location>
</feature>
<feature type="transmembrane region" description="Helical" evidence="1">
    <location>
        <begin position="51"/>
        <end position="71"/>
    </location>
</feature>
<feature type="transmembrane region" description="Helical" evidence="1">
    <location>
        <begin position="86"/>
        <end position="106"/>
    </location>
</feature>
<feature type="transmembrane region" description="Helical" evidence="1">
    <location>
        <begin position="121"/>
        <end position="141"/>
    </location>
</feature>
<keyword id="KW-1003">Cell membrane</keyword>
<keyword id="KW-0472">Membrane</keyword>
<keyword id="KW-0812">Transmembrane</keyword>
<keyword id="KW-1133">Transmembrane helix</keyword>